<reference key="1">
    <citation type="submission" date="2005-09" db="EMBL/GenBank/DDBJ databases">
        <title>DOE Joint Genome Institute Xenopus tropicalis EST project.</title>
        <authorList>
            <person name="Richardson P."/>
            <person name="Lucas S."/>
            <person name="Rokhsar D."/>
            <person name="Detter J.C."/>
            <person name="Ng D.C."/>
            <person name="Brokstein P."/>
            <person name="Lindquist E.A."/>
        </authorList>
    </citation>
    <scope>NUCLEOTIDE SEQUENCE [LARGE SCALE MRNA] (ISOFORM 1)</scope>
    <source>
        <tissue>Testis</tissue>
    </source>
</reference>
<reference key="2">
    <citation type="submission" date="2007-03" db="EMBL/GenBank/DDBJ databases">
        <authorList>
            <consortium name="NIH - Xenopus Gene Collection (XGC) project"/>
        </authorList>
    </citation>
    <scope>NUCLEOTIDE SEQUENCE [LARGE SCALE MRNA] (ISOFORM 2)</scope>
    <source>
        <tissue>Embryo</tissue>
    </source>
</reference>
<name>NUBP2_XENTR</name>
<dbReference type="EMBL" id="CX932505">
    <property type="status" value="NOT_ANNOTATED_CDS"/>
    <property type="molecule type" value="mRNA"/>
</dbReference>
<dbReference type="EMBL" id="BC135883">
    <property type="protein sequence ID" value="AAI35884.1"/>
    <property type="molecule type" value="mRNA"/>
</dbReference>
<dbReference type="RefSeq" id="NP_001096534.1">
    <molecule id="A4QNM5-2"/>
    <property type="nucleotide sequence ID" value="NM_001103064.1"/>
</dbReference>
<dbReference type="RefSeq" id="XP_012825448.1">
    <molecule id="A4QNM5-1"/>
    <property type="nucleotide sequence ID" value="XM_012969994.3"/>
</dbReference>
<dbReference type="SMR" id="A4QNM5"/>
<dbReference type="FunCoup" id="A4QNM5">
    <property type="interactions" value="811"/>
</dbReference>
<dbReference type="STRING" id="8364.ENSXETP00000002486"/>
<dbReference type="PaxDb" id="8364-ENSXETP00000022766"/>
<dbReference type="GeneID" id="100125178"/>
<dbReference type="KEGG" id="xtr:100125178"/>
<dbReference type="AGR" id="Xenbase:XB-GENE-999229"/>
<dbReference type="CTD" id="10101"/>
<dbReference type="Xenbase" id="XB-GENE-999229">
    <property type="gene designation" value="nubp2"/>
</dbReference>
<dbReference type="eggNOG" id="KOG3022">
    <property type="taxonomic scope" value="Eukaryota"/>
</dbReference>
<dbReference type="HOGENOM" id="CLU_024839_0_1_1"/>
<dbReference type="InParanoid" id="A4QNM5"/>
<dbReference type="OMA" id="WIPVFAD"/>
<dbReference type="OrthoDB" id="1741334at2759"/>
<dbReference type="PhylomeDB" id="A4QNM5"/>
<dbReference type="TreeFam" id="TF354321"/>
<dbReference type="Proteomes" id="UP000008143">
    <property type="component" value="Chromosome 9"/>
</dbReference>
<dbReference type="Bgee" id="ENSXETG00000010354">
    <property type="expression patterns" value="Expressed in mesonephros and 13 other cell types or tissues"/>
</dbReference>
<dbReference type="GO" id="GO:0005737">
    <property type="term" value="C:cytoplasm"/>
    <property type="evidence" value="ECO:0007669"/>
    <property type="project" value="UniProtKB-SubCell"/>
</dbReference>
<dbReference type="GO" id="GO:0051539">
    <property type="term" value="F:4 iron, 4 sulfur cluster binding"/>
    <property type="evidence" value="ECO:0007669"/>
    <property type="project" value="UniProtKB-UniRule"/>
</dbReference>
<dbReference type="GO" id="GO:0005524">
    <property type="term" value="F:ATP binding"/>
    <property type="evidence" value="ECO:0007669"/>
    <property type="project" value="UniProtKB-KW"/>
</dbReference>
<dbReference type="GO" id="GO:0140663">
    <property type="term" value="F:ATP-dependent FeS chaperone activity"/>
    <property type="evidence" value="ECO:0007669"/>
    <property type="project" value="InterPro"/>
</dbReference>
<dbReference type="GO" id="GO:0046872">
    <property type="term" value="F:metal ion binding"/>
    <property type="evidence" value="ECO:0007669"/>
    <property type="project" value="UniProtKB-KW"/>
</dbReference>
<dbReference type="GO" id="GO:0016226">
    <property type="term" value="P:iron-sulfur cluster assembly"/>
    <property type="evidence" value="ECO:0007669"/>
    <property type="project" value="UniProtKB-UniRule"/>
</dbReference>
<dbReference type="CDD" id="cd02037">
    <property type="entry name" value="Mrp_NBP35"/>
    <property type="match status" value="1"/>
</dbReference>
<dbReference type="FunFam" id="3.40.50.300:FF:000796">
    <property type="entry name" value="Cytosolic Fe-S cluster assembly factor NUBP2"/>
    <property type="match status" value="1"/>
</dbReference>
<dbReference type="Gene3D" id="3.40.50.300">
    <property type="entry name" value="P-loop containing nucleotide triphosphate hydrolases"/>
    <property type="match status" value="1"/>
</dbReference>
<dbReference type="HAMAP" id="MF_02040">
    <property type="entry name" value="Mrp_NBP35"/>
    <property type="match status" value="1"/>
</dbReference>
<dbReference type="HAMAP" id="MF_03039">
    <property type="entry name" value="NUBP2"/>
    <property type="match status" value="1"/>
</dbReference>
<dbReference type="InterPro" id="IPR000808">
    <property type="entry name" value="Mrp-like_CS"/>
</dbReference>
<dbReference type="InterPro" id="IPR019591">
    <property type="entry name" value="Mrp/NBP35_ATP-bd"/>
</dbReference>
<dbReference type="InterPro" id="IPR028600">
    <property type="entry name" value="NUBP2/Cfd1_eukaryotes"/>
</dbReference>
<dbReference type="InterPro" id="IPR027417">
    <property type="entry name" value="P-loop_NTPase"/>
</dbReference>
<dbReference type="InterPro" id="IPR033756">
    <property type="entry name" value="YlxH/NBP35"/>
</dbReference>
<dbReference type="PANTHER" id="PTHR23264:SF19">
    <property type="entry name" value="CYTOSOLIC FE-S CLUSTER ASSEMBLY FACTOR NUBP2"/>
    <property type="match status" value="1"/>
</dbReference>
<dbReference type="PANTHER" id="PTHR23264">
    <property type="entry name" value="NUCLEOTIDE-BINDING PROTEIN NBP35 YEAST -RELATED"/>
    <property type="match status" value="1"/>
</dbReference>
<dbReference type="Pfam" id="PF10609">
    <property type="entry name" value="ParA"/>
    <property type="match status" value="1"/>
</dbReference>
<dbReference type="SUPFAM" id="SSF52540">
    <property type="entry name" value="P-loop containing nucleoside triphosphate hydrolases"/>
    <property type="match status" value="1"/>
</dbReference>
<dbReference type="PROSITE" id="PS01215">
    <property type="entry name" value="MRP"/>
    <property type="match status" value="1"/>
</dbReference>
<proteinExistence type="evidence at transcript level"/>
<protein>
    <recommendedName>
        <fullName evidence="1">Cytosolic Fe-S cluster assembly factor nubp2</fullName>
    </recommendedName>
    <alternativeName>
        <fullName evidence="1">Nucleotide-binding protein 2</fullName>
        <shortName evidence="1">NBP 2</shortName>
    </alternativeName>
</protein>
<gene>
    <name type="primary">nubp2</name>
</gene>
<comment type="function">
    <text evidence="1">Component of the cytosolic iron-sulfur (Fe/S) protein assembly (CIA) machinery. Required for maturation of extramitochondrial Fe-S proteins. The nubp1-nubp2 heterotetramer forms a Fe-S scaffold complex, mediating the de novo assembly of an Fe-S cluster and its transfer to target apoproteins.</text>
</comment>
<comment type="cofactor">
    <cofactor evidence="1">
        <name>[4Fe-4S] cluster</name>
        <dbReference type="ChEBI" id="CHEBI:49883"/>
    </cofactor>
    <text evidence="1">Binds 4 [4Fe-4S] clusters per heterotetramer. Contains two stable clusters in the N-termini of nubp1 and two labile, bridging clusters between subunits of the nubp1-nubp2 heterotetramer.</text>
</comment>
<comment type="subunit">
    <text evidence="1">Heterotetramer of 2 nubp1 and 2 nubp2 chains.</text>
</comment>
<comment type="subcellular location">
    <subcellularLocation>
        <location evidence="1">Cytoplasm</location>
    </subcellularLocation>
</comment>
<comment type="alternative products">
    <event type="alternative splicing"/>
    <isoform>
        <id>A4QNM5-1</id>
        <name>1</name>
        <sequence type="displayed"/>
    </isoform>
    <isoform>
        <id>A4QNM5-2</id>
        <name>2</name>
        <sequence type="described" ref="VSP_037923"/>
    </isoform>
</comment>
<comment type="similarity">
    <text evidence="1">Belongs to the Mrp/NBP35 ATP-binding proteins family. NUBP2/CFD1 subfamily.</text>
</comment>
<feature type="chain" id="PRO_0000382704" description="Cytosolic Fe-S cluster assembly factor nubp2">
    <location>
        <begin position="1"/>
        <end position="270"/>
    </location>
</feature>
<feature type="binding site" evidence="1">
    <location>
        <begin position="22"/>
        <end position="29"/>
    </location>
    <ligand>
        <name>ATP</name>
        <dbReference type="ChEBI" id="CHEBI:30616"/>
    </ligand>
</feature>
<feature type="binding site" evidence="1">
    <location>
        <position position="196"/>
    </location>
    <ligand>
        <name>[4Fe-4S] cluster</name>
        <dbReference type="ChEBI" id="CHEBI:49883"/>
        <note>ligand shared between dimeric partners</note>
    </ligand>
</feature>
<feature type="binding site" evidence="1">
    <location>
        <position position="199"/>
    </location>
    <ligand>
        <name>[4Fe-4S] cluster</name>
        <dbReference type="ChEBI" id="CHEBI:49883"/>
        <note>ligand shared between dimeric partners</note>
    </ligand>
</feature>
<feature type="splice variant" id="VSP_037923" description="In isoform 2." evidence="2">
    <location>
        <begin position="164"/>
        <end position="200"/>
    </location>
</feature>
<evidence type="ECO:0000255" key="1">
    <source>
        <dbReference type="HAMAP-Rule" id="MF_03039"/>
    </source>
</evidence>
<evidence type="ECO:0000303" key="2">
    <source ref="2"/>
</evidence>
<organism>
    <name type="scientific">Xenopus tropicalis</name>
    <name type="common">Western clawed frog</name>
    <name type="synonym">Silurana tropicalis</name>
    <dbReference type="NCBI Taxonomy" id="8364"/>
    <lineage>
        <taxon>Eukaryota</taxon>
        <taxon>Metazoa</taxon>
        <taxon>Chordata</taxon>
        <taxon>Craniata</taxon>
        <taxon>Vertebrata</taxon>
        <taxon>Euteleostomi</taxon>
        <taxon>Amphibia</taxon>
        <taxon>Batrachia</taxon>
        <taxon>Anura</taxon>
        <taxon>Pipoidea</taxon>
        <taxon>Pipidae</taxon>
        <taxon>Xenopodinae</taxon>
        <taxon>Xenopus</taxon>
        <taxon>Silurana</taxon>
    </lineage>
</organism>
<accession>A4QNM5</accession>
<keyword id="KW-0004">4Fe-4S</keyword>
<keyword id="KW-0025">Alternative splicing</keyword>
<keyword id="KW-0067">ATP-binding</keyword>
<keyword id="KW-0963">Cytoplasm</keyword>
<keyword id="KW-0408">Iron</keyword>
<keyword id="KW-0411">Iron-sulfur</keyword>
<keyword id="KW-0479">Metal-binding</keyword>
<keyword id="KW-0547">Nucleotide-binding</keyword>
<keyword id="KW-1185">Reference proteome</keyword>
<sequence>MERSQDGGNLSGVQHIILVLSGKGGVGKSTISTEIALALRHAGKKVGILDVDLCGPSIPRMLNAQSKDVHQCDSGWVPVYVDQEKSISLMSIGFLLEHPDDAVVWRGPKKNALIKQFASDVAWGDLDFLIVDTPPGTSDEHIATVDALRPFNPMGALLVTTPQAVSVGDVRRELTFCKKTGLRVIGIVENMSGYVCPHCTECTNIFSKGGGEELARLSGVPFLGCVPLDPLLSQSLEQGKDFVQEFPNSAAYPAISSIARQILDMASPRS</sequence>